<evidence type="ECO:0000250" key="1"/>
<evidence type="ECO:0000255" key="2">
    <source>
        <dbReference type="HAMAP-Rule" id="MF_00248"/>
    </source>
</evidence>
<proteinExistence type="inferred from homology"/>
<protein>
    <recommendedName>
        <fullName evidence="2">ATP-dependent protease subunit HslV</fullName>
        <ecNumber evidence="2">3.4.25.2</ecNumber>
    </recommendedName>
</protein>
<dbReference type="EC" id="3.4.25.2" evidence="2"/>
<dbReference type="EMBL" id="AE013218">
    <property type="protein sequence ID" value="AAM68095.1"/>
    <property type="molecule type" value="Genomic_DNA"/>
</dbReference>
<dbReference type="RefSeq" id="WP_011054061.1">
    <property type="nucleotide sequence ID" value="NC_004061.1"/>
</dbReference>
<dbReference type="SMR" id="Q8K906"/>
<dbReference type="STRING" id="198804.BUsg_557"/>
<dbReference type="MEROPS" id="T01.006"/>
<dbReference type="GeneID" id="93004035"/>
<dbReference type="KEGG" id="bas:BUsg_557"/>
<dbReference type="eggNOG" id="COG5405">
    <property type="taxonomic scope" value="Bacteria"/>
</dbReference>
<dbReference type="HOGENOM" id="CLU_093872_1_0_6"/>
<dbReference type="Proteomes" id="UP000000416">
    <property type="component" value="Chromosome"/>
</dbReference>
<dbReference type="GO" id="GO:0009376">
    <property type="term" value="C:HslUV protease complex"/>
    <property type="evidence" value="ECO:0007669"/>
    <property type="project" value="UniProtKB-UniRule"/>
</dbReference>
<dbReference type="GO" id="GO:0005839">
    <property type="term" value="C:proteasome core complex"/>
    <property type="evidence" value="ECO:0007669"/>
    <property type="project" value="InterPro"/>
</dbReference>
<dbReference type="GO" id="GO:0046872">
    <property type="term" value="F:metal ion binding"/>
    <property type="evidence" value="ECO:0007669"/>
    <property type="project" value="UniProtKB-KW"/>
</dbReference>
<dbReference type="GO" id="GO:0004298">
    <property type="term" value="F:threonine-type endopeptidase activity"/>
    <property type="evidence" value="ECO:0007669"/>
    <property type="project" value="UniProtKB-KW"/>
</dbReference>
<dbReference type="GO" id="GO:0051603">
    <property type="term" value="P:proteolysis involved in protein catabolic process"/>
    <property type="evidence" value="ECO:0007669"/>
    <property type="project" value="InterPro"/>
</dbReference>
<dbReference type="CDD" id="cd01913">
    <property type="entry name" value="protease_HslV"/>
    <property type="match status" value="1"/>
</dbReference>
<dbReference type="FunFam" id="3.60.20.10:FF:000002">
    <property type="entry name" value="ATP-dependent protease subunit HslV"/>
    <property type="match status" value="1"/>
</dbReference>
<dbReference type="Gene3D" id="3.60.20.10">
    <property type="entry name" value="Glutamine Phosphoribosylpyrophosphate, subunit 1, domain 1"/>
    <property type="match status" value="1"/>
</dbReference>
<dbReference type="HAMAP" id="MF_00248">
    <property type="entry name" value="HslV"/>
    <property type="match status" value="1"/>
</dbReference>
<dbReference type="InterPro" id="IPR022281">
    <property type="entry name" value="ATP-dep_Prtase_HsIV_su"/>
</dbReference>
<dbReference type="InterPro" id="IPR029055">
    <property type="entry name" value="Ntn_hydrolases_N"/>
</dbReference>
<dbReference type="InterPro" id="IPR001353">
    <property type="entry name" value="Proteasome_sua/b"/>
</dbReference>
<dbReference type="InterPro" id="IPR023333">
    <property type="entry name" value="Proteasome_suB-type"/>
</dbReference>
<dbReference type="NCBIfam" id="TIGR03692">
    <property type="entry name" value="ATP_dep_HslV"/>
    <property type="match status" value="1"/>
</dbReference>
<dbReference type="NCBIfam" id="NF003964">
    <property type="entry name" value="PRK05456.1"/>
    <property type="match status" value="1"/>
</dbReference>
<dbReference type="PANTHER" id="PTHR32194:SF0">
    <property type="entry name" value="ATP-DEPENDENT PROTEASE SUBUNIT HSLV"/>
    <property type="match status" value="1"/>
</dbReference>
<dbReference type="PANTHER" id="PTHR32194">
    <property type="entry name" value="METALLOPROTEASE TLDD"/>
    <property type="match status" value="1"/>
</dbReference>
<dbReference type="Pfam" id="PF00227">
    <property type="entry name" value="Proteasome"/>
    <property type="match status" value="1"/>
</dbReference>
<dbReference type="PIRSF" id="PIRSF039093">
    <property type="entry name" value="HslV"/>
    <property type="match status" value="1"/>
</dbReference>
<dbReference type="SUPFAM" id="SSF56235">
    <property type="entry name" value="N-terminal nucleophile aminohydrolases (Ntn hydrolases)"/>
    <property type="match status" value="1"/>
</dbReference>
<dbReference type="PROSITE" id="PS51476">
    <property type="entry name" value="PROTEASOME_BETA_2"/>
    <property type="match status" value="1"/>
</dbReference>
<comment type="function">
    <text evidence="2">Protease subunit of a proteasome-like degradation complex believed to be a general protein degrading machinery.</text>
</comment>
<comment type="catalytic activity">
    <reaction evidence="2">
        <text>ATP-dependent cleavage of peptide bonds with broad specificity.</text>
        <dbReference type="EC" id="3.4.25.2"/>
    </reaction>
</comment>
<comment type="activity regulation">
    <text evidence="2">Allosterically activated by HslU binding.</text>
</comment>
<comment type="subunit">
    <text evidence="2">A double ring-shaped homohexamer of HslV is capped on each side by a ring-shaped HslU homohexamer. The assembly of the HslU/HslV complex is dependent on binding of ATP.</text>
</comment>
<comment type="subcellular location">
    <subcellularLocation>
        <location evidence="2">Cytoplasm</location>
    </subcellularLocation>
</comment>
<comment type="similarity">
    <text evidence="2">Belongs to the peptidase T1B family. HslV subfamily.</text>
</comment>
<keyword id="KW-0021">Allosteric enzyme</keyword>
<keyword id="KW-0963">Cytoplasm</keyword>
<keyword id="KW-0378">Hydrolase</keyword>
<keyword id="KW-0479">Metal-binding</keyword>
<keyword id="KW-0645">Protease</keyword>
<keyword id="KW-0915">Sodium</keyword>
<keyword id="KW-0888">Threonine protease</keyword>
<feature type="initiator methionine" description="Removed" evidence="1">
    <location>
        <position position="1"/>
    </location>
</feature>
<feature type="chain" id="PRO_0000148095" description="ATP-dependent protease subunit HslV">
    <location>
        <begin position="2"/>
        <end position="176"/>
    </location>
</feature>
<feature type="active site" evidence="2">
    <location>
        <position position="2"/>
    </location>
</feature>
<feature type="binding site" evidence="2">
    <location>
        <position position="157"/>
    </location>
    <ligand>
        <name>Na(+)</name>
        <dbReference type="ChEBI" id="CHEBI:29101"/>
    </ligand>
</feature>
<feature type="binding site" evidence="2">
    <location>
        <position position="160"/>
    </location>
    <ligand>
        <name>Na(+)</name>
        <dbReference type="ChEBI" id="CHEBI:29101"/>
    </ligand>
</feature>
<feature type="binding site" evidence="2">
    <location>
        <position position="163"/>
    </location>
    <ligand>
        <name>Na(+)</name>
        <dbReference type="ChEBI" id="CHEBI:29101"/>
    </ligand>
</feature>
<sequence>MTTILSVRLKNKVVIGGDGQATLGNTIMKSNVKKIRTLYHEKVIAGFAGGTADAFTLFEMFEKKLAMYQGQLPRAAIELAKDWRSDRMLRKLEALLAVADKDTSLIITGNGDVIQPEDDLIAIGSGGSYAQSAARALINNTTLNADEIVEKSLNIAANICIYTNHSFTIKELFSEK</sequence>
<organism>
    <name type="scientific">Buchnera aphidicola subsp. Schizaphis graminum (strain Sg)</name>
    <dbReference type="NCBI Taxonomy" id="198804"/>
    <lineage>
        <taxon>Bacteria</taxon>
        <taxon>Pseudomonadati</taxon>
        <taxon>Pseudomonadota</taxon>
        <taxon>Gammaproteobacteria</taxon>
        <taxon>Enterobacterales</taxon>
        <taxon>Erwiniaceae</taxon>
        <taxon>Buchnera</taxon>
    </lineage>
</organism>
<accession>Q8K906</accession>
<name>HSLV_BUCAP</name>
<reference key="1">
    <citation type="journal article" date="2002" name="Science">
        <title>50 million years of genomic stasis in endosymbiotic bacteria.</title>
        <authorList>
            <person name="Tamas I."/>
            <person name="Klasson L."/>
            <person name="Canbaeck B."/>
            <person name="Naeslund A.K."/>
            <person name="Eriksson A.-S."/>
            <person name="Wernegreen J.J."/>
            <person name="Sandstroem J.P."/>
            <person name="Moran N.A."/>
            <person name="Andersson S.G.E."/>
        </authorList>
    </citation>
    <scope>NUCLEOTIDE SEQUENCE [LARGE SCALE GENOMIC DNA]</scope>
    <source>
        <strain>Sg</strain>
    </source>
</reference>
<gene>
    <name evidence="2" type="primary">hslV</name>
    <name type="ordered locus">BUsg_557</name>
</gene>